<feature type="signal peptide" evidence="2">
    <location>
        <begin position="1"/>
        <end position="16"/>
    </location>
</feature>
<feature type="propeptide" id="PRO_0000026303" description="Activation peptide">
    <location>
        <begin position="17"/>
        <end position="115"/>
    </location>
</feature>
<feature type="chain" id="PRO_0000026304" description="Cathepsin K">
    <location>
        <begin position="116"/>
        <end position="330"/>
    </location>
</feature>
<feature type="active site" evidence="1">
    <location>
        <position position="140"/>
    </location>
</feature>
<feature type="active site" evidence="1">
    <location>
        <position position="277"/>
    </location>
</feature>
<feature type="active site" evidence="1">
    <location>
        <position position="297"/>
    </location>
</feature>
<feature type="glycosylation site" description="N-linked (GlcNAc...) asparagine" evidence="2">
    <location>
        <position position="104"/>
    </location>
</feature>
<feature type="disulfide bond" evidence="1">
    <location>
        <begin position="137"/>
        <end position="178"/>
    </location>
</feature>
<feature type="disulfide bond" evidence="1">
    <location>
        <begin position="171"/>
        <end position="211"/>
    </location>
</feature>
<feature type="disulfide bond" evidence="1">
    <location>
        <begin position="270"/>
        <end position="319"/>
    </location>
</feature>
<reference key="1">
    <citation type="journal article" date="2000" name="J. Cell Sci.">
        <title>Cathepsin K in thyroid epithelial cells: sequence, localization and possible function in extracellular proteolysis of thyroglobulin.</title>
        <authorList>
            <person name="Tepel C."/>
            <person name="Broemme D."/>
            <person name="Herzog V."/>
            <person name="Brix K."/>
        </authorList>
    </citation>
    <scope>NUCLEOTIDE SEQUENCE [MRNA]</scope>
    <scope>FUNCTION</scope>
    <scope>SUBCELLULAR LOCATION</scope>
    <scope>TISSUE SPECIFICITY</scope>
    <source>
        <tissue>Thyroid</tissue>
    </source>
</reference>
<proteinExistence type="evidence at transcript level"/>
<sequence length="330" mass="37069">MWGLKVVLLLPVMSSALYPEEILDTQWELWKKTYRKQYNSKVDEISRRLIWEKNLKHISIHNLEASLGVHTYELAMNHLGDMTSEEVVQKMTGLKVPPSHSRSNDTLYIPDWEGRTPDSIDYRKKGYVTPVKNQGQCGSCWAFSSVGALEGQLKKKTGKLLNLSPQNLVDCVSENDGCGGGYMTNAFQYVQKNRGIDSEDAYPYVGQDENCMYNPTGKAAKCRGYREIPEGNEKALKRAVARVGPVSVAIDASLTSFQFYSKGVYYDENCNSDNLNHAVLAVGYGIQKGKKHWIIKNSWGENWGNKGYILMARNKNNACGIANLASFPKM</sequence>
<evidence type="ECO:0000250" key="1"/>
<evidence type="ECO:0000255" key="2"/>
<evidence type="ECO:0000255" key="3">
    <source>
        <dbReference type="PROSITE-ProRule" id="PRU10088"/>
    </source>
</evidence>
<evidence type="ECO:0000255" key="4">
    <source>
        <dbReference type="PROSITE-ProRule" id="PRU10089"/>
    </source>
</evidence>
<evidence type="ECO:0000255" key="5">
    <source>
        <dbReference type="PROSITE-ProRule" id="PRU10090"/>
    </source>
</evidence>
<evidence type="ECO:0000269" key="6">
    <source>
    </source>
</evidence>
<gene>
    <name type="primary">CTSK</name>
</gene>
<comment type="function">
    <text evidence="1 6">Thiol protease involved in osteoclastic bone resorption and may participate partially in the disorder of bone remodeling. Displays potent endoprotease activity against fibrinogen at acid pH. May play an important role in extracellular matrix degradation (By similarity). Involved in the release of thyroid hormone thyroxine (T4) by limited proteolysis of TG/thyroglobulin in the thyroid follicle lumen.</text>
</comment>
<comment type="catalytic activity">
    <reaction>
        <text>Broad proteolytic activity. With small-molecule substrates and inhibitors, the major determinant of specificity is P2, which is preferably Leu, Met &gt; Phe, and not Arg.</text>
        <dbReference type="EC" id="3.4.22.38"/>
    </reaction>
</comment>
<comment type="subcellular location">
    <subcellularLocation>
        <location evidence="6">Lysosome</location>
    </subcellularLocation>
    <subcellularLocation>
        <location evidence="6">Secreted</location>
    </subcellularLocation>
    <subcellularLocation>
        <location evidence="6">Apical cell membrane</location>
        <topology evidence="6">Peripheral membrane protein</topology>
        <orientation evidence="6">Extracellular side</orientation>
    </subcellularLocation>
    <text evidence="6">Localizes to the lumen of thyroid follicles and to the apical membrane of thyroid epithelial cells.</text>
</comment>
<comment type="tissue specificity">
    <text evidence="6">Expressed in the thyroid epithelial cells.</text>
</comment>
<comment type="similarity">
    <text evidence="3 4 5">Belongs to the peptidase C1 family.</text>
</comment>
<accession>Q9GLE3</accession>
<name>CATK_PIG</name>
<protein>
    <recommendedName>
        <fullName>Cathepsin K</fullName>
        <ecNumber>3.4.22.38</ecNumber>
    </recommendedName>
</protein>
<organism>
    <name type="scientific">Sus scrofa</name>
    <name type="common">Pig</name>
    <dbReference type="NCBI Taxonomy" id="9823"/>
    <lineage>
        <taxon>Eukaryota</taxon>
        <taxon>Metazoa</taxon>
        <taxon>Chordata</taxon>
        <taxon>Craniata</taxon>
        <taxon>Vertebrata</taxon>
        <taxon>Euteleostomi</taxon>
        <taxon>Mammalia</taxon>
        <taxon>Eutheria</taxon>
        <taxon>Laurasiatheria</taxon>
        <taxon>Artiodactyla</taxon>
        <taxon>Suina</taxon>
        <taxon>Suidae</taxon>
        <taxon>Sus</taxon>
    </lineage>
</organism>
<dbReference type="EC" id="3.4.22.38"/>
<dbReference type="EMBL" id="AF292030">
    <property type="protein sequence ID" value="AAG12340.1"/>
    <property type="molecule type" value="mRNA"/>
</dbReference>
<dbReference type="RefSeq" id="NP_999467.1">
    <property type="nucleotide sequence ID" value="NM_214302.1"/>
</dbReference>
<dbReference type="RefSeq" id="XP_005663523.1">
    <property type="nucleotide sequence ID" value="XM_005663466.3"/>
</dbReference>
<dbReference type="SMR" id="Q9GLE3"/>
<dbReference type="FunCoup" id="Q9GLE3">
    <property type="interactions" value="203"/>
</dbReference>
<dbReference type="MEROPS" id="C01.036"/>
<dbReference type="MEROPS" id="I29.007"/>
<dbReference type="GlyCosmos" id="Q9GLE3">
    <property type="glycosylation" value="1 site, No reported glycans"/>
</dbReference>
<dbReference type="GlyGen" id="Q9GLE3">
    <property type="glycosylation" value="1 site"/>
</dbReference>
<dbReference type="PaxDb" id="9823-ENSSSCP00000007088"/>
<dbReference type="Ensembl" id="ENSSSCT00000102124.1">
    <property type="protein sequence ID" value="ENSSSCP00000075775.1"/>
    <property type="gene ID" value="ENSSSCG00000052889.1"/>
</dbReference>
<dbReference type="Ensembl" id="ENSSSCT00070000544.1">
    <property type="protein sequence ID" value="ENSSSCP00070000469.1"/>
    <property type="gene ID" value="ENSSSCG00070000306.1"/>
</dbReference>
<dbReference type="Ensembl" id="ENSSSCT00085042274">
    <property type="protein sequence ID" value="ENSSSCP00085029671"/>
    <property type="gene ID" value="ENSSSCG00085022061"/>
</dbReference>
<dbReference type="Ensembl" id="ENSSSCT00110040443">
    <property type="protein sequence ID" value="ENSSSCP00110028198"/>
    <property type="gene ID" value="ENSSSCG00110020878"/>
</dbReference>
<dbReference type="Ensembl" id="ENSSSCT00115025354">
    <property type="protein sequence ID" value="ENSSSCP00115024022"/>
    <property type="gene ID" value="ENSSSCG00115014467"/>
</dbReference>
<dbReference type="Ensembl" id="ENSSSCT00130074741">
    <property type="protein sequence ID" value="ENSSSCP00130053709"/>
    <property type="gene ID" value="ENSSSCG00130038335"/>
</dbReference>
<dbReference type="GeneID" id="397569"/>
<dbReference type="KEGG" id="ssc:397569"/>
<dbReference type="CTD" id="1513"/>
<dbReference type="eggNOG" id="KOG1543">
    <property type="taxonomic scope" value="Eukaryota"/>
</dbReference>
<dbReference type="GeneTree" id="ENSGT00940000157759"/>
<dbReference type="HOGENOM" id="CLU_012184_1_2_1"/>
<dbReference type="InParanoid" id="Q9GLE3"/>
<dbReference type="OrthoDB" id="65740at2759"/>
<dbReference type="TreeFam" id="TF313739"/>
<dbReference type="Reactome" id="R-SSC-1442490">
    <property type="pathway name" value="Collagen degradation"/>
</dbReference>
<dbReference type="Reactome" id="R-SSC-1592389">
    <property type="pathway name" value="Activation of Matrix Metalloproteinases"/>
</dbReference>
<dbReference type="Reactome" id="R-SSC-1679131">
    <property type="pathway name" value="Trafficking and processing of endosomal TLR"/>
</dbReference>
<dbReference type="Reactome" id="R-SSC-2132295">
    <property type="pathway name" value="MHC class II antigen presentation"/>
</dbReference>
<dbReference type="Reactome" id="R-SSC-8939242">
    <property type="pathway name" value="RUNX1 regulates transcription of genes involved in differentiation of keratinocytes"/>
</dbReference>
<dbReference type="Proteomes" id="UP000008227">
    <property type="component" value="Chromosome 4"/>
</dbReference>
<dbReference type="Proteomes" id="UP000314985">
    <property type="component" value="Chromosome 4"/>
</dbReference>
<dbReference type="Proteomes" id="UP000694570">
    <property type="component" value="Unplaced"/>
</dbReference>
<dbReference type="Proteomes" id="UP000694571">
    <property type="component" value="Unplaced"/>
</dbReference>
<dbReference type="Proteomes" id="UP000694720">
    <property type="component" value="Unplaced"/>
</dbReference>
<dbReference type="Proteomes" id="UP000694722">
    <property type="component" value="Unplaced"/>
</dbReference>
<dbReference type="Proteomes" id="UP000694723">
    <property type="component" value="Unplaced"/>
</dbReference>
<dbReference type="Proteomes" id="UP000694724">
    <property type="component" value="Unplaced"/>
</dbReference>
<dbReference type="Proteomes" id="UP000694725">
    <property type="component" value="Unplaced"/>
</dbReference>
<dbReference type="Proteomes" id="UP000694726">
    <property type="component" value="Unplaced"/>
</dbReference>
<dbReference type="Proteomes" id="UP000694727">
    <property type="component" value="Unplaced"/>
</dbReference>
<dbReference type="Proteomes" id="UP000694728">
    <property type="component" value="Unplaced"/>
</dbReference>
<dbReference type="GO" id="GO:0016324">
    <property type="term" value="C:apical plasma membrane"/>
    <property type="evidence" value="ECO:0007669"/>
    <property type="project" value="UniProtKB-SubCell"/>
</dbReference>
<dbReference type="GO" id="GO:0009897">
    <property type="term" value="C:external side of plasma membrane"/>
    <property type="evidence" value="ECO:0007669"/>
    <property type="project" value="Ensembl"/>
</dbReference>
<dbReference type="GO" id="GO:0005615">
    <property type="term" value="C:extracellular space"/>
    <property type="evidence" value="ECO:0000314"/>
    <property type="project" value="UniProtKB"/>
</dbReference>
<dbReference type="GO" id="GO:0005764">
    <property type="term" value="C:lysosome"/>
    <property type="evidence" value="ECO:0000314"/>
    <property type="project" value="UniProtKB"/>
</dbReference>
<dbReference type="GO" id="GO:0005654">
    <property type="term" value="C:nucleoplasm"/>
    <property type="evidence" value="ECO:0007669"/>
    <property type="project" value="Ensembl"/>
</dbReference>
<dbReference type="GO" id="GO:0005518">
    <property type="term" value="F:collagen binding"/>
    <property type="evidence" value="ECO:0007669"/>
    <property type="project" value="Ensembl"/>
</dbReference>
<dbReference type="GO" id="GO:0004197">
    <property type="term" value="F:cysteine-type endopeptidase activity"/>
    <property type="evidence" value="ECO:0000318"/>
    <property type="project" value="GO_Central"/>
</dbReference>
<dbReference type="GO" id="GO:0001968">
    <property type="term" value="F:fibronectin binding"/>
    <property type="evidence" value="ECO:0007669"/>
    <property type="project" value="Ensembl"/>
</dbReference>
<dbReference type="GO" id="GO:0043394">
    <property type="term" value="F:proteoglycan binding"/>
    <property type="evidence" value="ECO:0007669"/>
    <property type="project" value="Ensembl"/>
</dbReference>
<dbReference type="GO" id="GO:0045453">
    <property type="term" value="P:bone resorption"/>
    <property type="evidence" value="ECO:0007669"/>
    <property type="project" value="Ensembl"/>
</dbReference>
<dbReference type="GO" id="GO:0030574">
    <property type="term" value="P:collagen catabolic process"/>
    <property type="evidence" value="ECO:0007669"/>
    <property type="project" value="Ensembl"/>
</dbReference>
<dbReference type="GO" id="GO:0061037">
    <property type="term" value="P:negative regulation of cartilage development"/>
    <property type="evidence" value="ECO:0007669"/>
    <property type="project" value="Ensembl"/>
</dbReference>
<dbReference type="GO" id="GO:0051603">
    <property type="term" value="P:proteolysis involved in protein catabolic process"/>
    <property type="evidence" value="ECO:0000318"/>
    <property type="project" value="GO_Central"/>
</dbReference>
<dbReference type="GO" id="GO:0006590">
    <property type="term" value="P:thyroid hormone generation"/>
    <property type="evidence" value="ECO:0000250"/>
    <property type="project" value="UniProtKB"/>
</dbReference>
<dbReference type="CDD" id="cd02248">
    <property type="entry name" value="Peptidase_C1A"/>
    <property type="match status" value="1"/>
</dbReference>
<dbReference type="FunFam" id="3.90.70.10:FF:000006">
    <property type="entry name" value="Cathepsin S"/>
    <property type="match status" value="1"/>
</dbReference>
<dbReference type="Gene3D" id="3.90.70.10">
    <property type="entry name" value="Cysteine proteinases"/>
    <property type="match status" value="1"/>
</dbReference>
<dbReference type="InterPro" id="IPR038765">
    <property type="entry name" value="Papain-like_cys_pep_sf"/>
</dbReference>
<dbReference type="InterPro" id="IPR025661">
    <property type="entry name" value="Pept_asp_AS"/>
</dbReference>
<dbReference type="InterPro" id="IPR000169">
    <property type="entry name" value="Pept_cys_AS"/>
</dbReference>
<dbReference type="InterPro" id="IPR025660">
    <property type="entry name" value="Pept_his_AS"/>
</dbReference>
<dbReference type="InterPro" id="IPR013128">
    <property type="entry name" value="Peptidase_C1A"/>
</dbReference>
<dbReference type="InterPro" id="IPR000668">
    <property type="entry name" value="Peptidase_C1A_C"/>
</dbReference>
<dbReference type="InterPro" id="IPR039417">
    <property type="entry name" value="Peptidase_C1A_papain-like"/>
</dbReference>
<dbReference type="InterPro" id="IPR013201">
    <property type="entry name" value="Prot_inhib_I29"/>
</dbReference>
<dbReference type="PANTHER" id="PTHR12411">
    <property type="entry name" value="CYSTEINE PROTEASE FAMILY C1-RELATED"/>
    <property type="match status" value="1"/>
</dbReference>
<dbReference type="Pfam" id="PF08246">
    <property type="entry name" value="Inhibitor_I29"/>
    <property type="match status" value="1"/>
</dbReference>
<dbReference type="Pfam" id="PF00112">
    <property type="entry name" value="Peptidase_C1"/>
    <property type="match status" value="1"/>
</dbReference>
<dbReference type="PRINTS" id="PR00705">
    <property type="entry name" value="PAPAIN"/>
</dbReference>
<dbReference type="SMART" id="SM00848">
    <property type="entry name" value="Inhibitor_I29"/>
    <property type="match status" value="1"/>
</dbReference>
<dbReference type="SMART" id="SM00645">
    <property type="entry name" value="Pept_C1"/>
    <property type="match status" value="1"/>
</dbReference>
<dbReference type="SUPFAM" id="SSF54001">
    <property type="entry name" value="Cysteine proteinases"/>
    <property type="match status" value="1"/>
</dbReference>
<dbReference type="PROSITE" id="PS00640">
    <property type="entry name" value="THIOL_PROTEASE_ASN"/>
    <property type="match status" value="1"/>
</dbReference>
<dbReference type="PROSITE" id="PS00139">
    <property type="entry name" value="THIOL_PROTEASE_CYS"/>
    <property type="match status" value="1"/>
</dbReference>
<dbReference type="PROSITE" id="PS00639">
    <property type="entry name" value="THIOL_PROTEASE_HIS"/>
    <property type="match status" value="1"/>
</dbReference>
<keyword id="KW-1003">Cell membrane</keyword>
<keyword id="KW-1015">Disulfide bond</keyword>
<keyword id="KW-0325">Glycoprotein</keyword>
<keyword id="KW-0378">Hydrolase</keyword>
<keyword id="KW-0458">Lysosome</keyword>
<keyword id="KW-0472">Membrane</keyword>
<keyword id="KW-0645">Protease</keyword>
<keyword id="KW-1185">Reference proteome</keyword>
<keyword id="KW-0964">Secreted</keyword>
<keyword id="KW-0732">Signal</keyword>
<keyword id="KW-0788">Thiol protease</keyword>
<keyword id="KW-0865">Zymogen</keyword>